<protein>
    <recommendedName>
        <fullName evidence="2">ATP synthase subunit e, mitochondrial</fullName>
        <shortName evidence="2">ATPase subunit e</shortName>
    </recommendedName>
    <alternativeName>
        <fullName evidence="2">Translocase of the inner membrane protein 11</fullName>
    </alternativeName>
</protein>
<keyword id="KW-0007">Acetylation</keyword>
<keyword id="KW-0066">ATP synthesis</keyword>
<keyword id="KW-0138">CF(0)</keyword>
<keyword id="KW-0903">Direct protein sequencing</keyword>
<keyword id="KW-0375">Hydrogen ion transport</keyword>
<keyword id="KW-0406">Ion transport</keyword>
<keyword id="KW-0472">Membrane</keyword>
<keyword id="KW-0496">Mitochondrion</keyword>
<keyword id="KW-0999">Mitochondrion inner membrane</keyword>
<keyword id="KW-0812">Transmembrane</keyword>
<keyword id="KW-1133">Transmembrane helix</keyword>
<keyword id="KW-0813">Transport</keyword>
<accession>C0HK61</accession>
<organism>
    <name type="scientific">Pichia angusta</name>
    <name type="common">Yeast</name>
    <name type="synonym">Hansenula polymorpha</name>
    <dbReference type="NCBI Taxonomy" id="870730"/>
    <lineage>
        <taxon>Eukaryota</taxon>
        <taxon>Fungi</taxon>
        <taxon>Dikarya</taxon>
        <taxon>Ascomycota</taxon>
        <taxon>Saccharomycotina</taxon>
        <taxon>Pichiomycetes</taxon>
        <taxon>Pichiales</taxon>
        <taxon>Pichiaceae</taxon>
        <taxon>Ogataea</taxon>
    </lineage>
</organism>
<gene>
    <name evidence="2" type="primary">TIM11</name>
    <name evidence="2" type="synonym">ATP21</name>
</gene>
<reference evidence="9" key="1">
    <citation type="submission" date="2016-08" db="UniProtKB">
        <authorList>
            <person name="Fearnley I.M."/>
        </authorList>
    </citation>
    <scope>PARTIAL PROTEIN SEQUENCE</scope>
    <source>
        <strain evidence="8">A16 / NCYC 2310</strain>
    </source>
</reference>
<reference evidence="9" key="2">
    <citation type="journal article" date="2015" name="Biochem. J.">
        <title>The purification and characterization of ATP synthase complexes from the mitochondria of four fungal species.</title>
        <authorList>
            <person name="Liu S."/>
            <person name="Charlesworth T.J."/>
            <person name="Bason J.V."/>
            <person name="Montgomery M.G."/>
            <person name="Harbour M.E."/>
            <person name="Fearnley I.M."/>
            <person name="Walker J.E."/>
        </authorList>
    </citation>
    <scope>PROTEIN SEQUENCE OF 1-7</scope>
    <scope>IDENTIFICATION IN ATP SYNTHASE COMPLEX</scope>
    <scope>FUNCTION OF ATPASE COMPLEX</scope>
    <scope>SUBUNIT</scope>
    <scope>SUBCELLULAR LOCATION</scope>
    <scope>MASS SPECTROMETRY</scope>
    <scope>IDENTIFICATION BY MASS SPECTROMETRY</scope>
    <scope>ACETYLATION AT SER-1</scope>
    <source>
        <strain evidence="7">A16 / NCYC 2310</strain>
    </source>
</reference>
<reference evidence="9" key="3">
    <citation type="journal article" date="2016" name="Proc. Natl. Acad. Sci. U.S.A.">
        <title>Structure of the mitochondrial ATP synthase from Pichia angusta determined by electron cryo-microscopy.</title>
        <authorList>
            <person name="Vinothkumar K.R."/>
            <person name="Montgomery M.G."/>
            <person name="Liu S."/>
            <person name="Walker J.E."/>
        </authorList>
    </citation>
    <scope>STRUCTURE BY ELECTRON MICROSCOPY (7.0 ANGSTROMS) OF MONOMERIC ATP SYNTHASE COMPLEX IN COMPLEX WITH BOVINE ATPIF1</scope>
    <scope>FUNCTION</scope>
    <scope>SUBUNIT</scope>
    <scope>SUBCELLULAR LOCATION</scope>
</reference>
<sequence length="89" mass="9945">STLNVLRYSSLAAGIVYGAYHTYTLKLEGEKKQELYDYQKKLKLVEAAKAEYRKLNPPKQAASTEAVNLDDPEFDFGKFILGAVEKLGS</sequence>
<name>ATPJ_PICAN</name>
<feature type="chain" id="PRO_0000445319" description="ATP synthase subunit e, mitochondrial" evidence="6">
    <location>
        <begin position="1"/>
        <end position="89"/>
    </location>
</feature>
<feature type="transmembrane region" description="Helical" evidence="3">
    <location>
        <begin position="8"/>
        <end position="25"/>
    </location>
</feature>
<feature type="modified residue" description="N-acetylserine" evidence="4">
    <location>
        <position position="1"/>
    </location>
</feature>
<proteinExistence type="evidence at protein level"/>
<evidence type="ECO:0000250" key="1">
    <source>
        <dbReference type="UniProtKB" id="B5FVG3"/>
    </source>
</evidence>
<evidence type="ECO:0000250" key="2">
    <source>
        <dbReference type="UniProtKB" id="P81449"/>
    </source>
</evidence>
<evidence type="ECO:0000255" key="3"/>
<evidence type="ECO:0000269" key="4">
    <source>
    </source>
</evidence>
<evidence type="ECO:0000269" key="5">
    <source>
    </source>
</evidence>
<evidence type="ECO:0000269" key="6">
    <source ref="1"/>
</evidence>
<evidence type="ECO:0000303" key="7">
    <source>
    </source>
</evidence>
<evidence type="ECO:0000303" key="8">
    <source ref="1"/>
</evidence>
<evidence type="ECO:0000305" key="9"/>
<evidence type="ECO:0000305" key="10">
    <source>
    </source>
</evidence>
<dbReference type="SMR" id="C0HK61"/>
<dbReference type="iPTMnet" id="C0HK61"/>
<dbReference type="GO" id="GO:0005743">
    <property type="term" value="C:mitochondrial inner membrane"/>
    <property type="evidence" value="ECO:0007669"/>
    <property type="project" value="UniProtKB-SubCell"/>
</dbReference>
<dbReference type="GO" id="GO:0045259">
    <property type="term" value="C:proton-transporting ATP synthase complex"/>
    <property type="evidence" value="ECO:0007669"/>
    <property type="project" value="UniProtKB-KW"/>
</dbReference>
<dbReference type="GO" id="GO:0015078">
    <property type="term" value="F:proton transmembrane transporter activity"/>
    <property type="evidence" value="ECO:0007669"/>
    <property type="project" value="InterPro"/>
</dbReference>
<dbReference type="GO" id="GO:0015986">
    <property type="term" value="P:proton motive force-driven ATP synthesis"/>
    <property type="evidence" value="ECO:0007669"/>
    <property type="project" value="InterPro"/>
</dbReference>
<dbReference type="InterPro" id="IPR008386">
    <property type="entry name" value="ATP_synth_F0_esu_mt"/>
</dbReference>
<dbReference type="Pfam" id="PF05680">
    <property type="entry name" value="ATP-synt_E"/>
    <property type="match status" value="1"/>
</dbReference>
<comment type="function">
    <text evidence="1 4 5">Mitochondrial membrane ATP synthase (F(1)F(0) ATP synthase or Complex V) produces ATP from ADP in the presence of a proton gradient across the membrane which is generated by electron transport complexes of the respiratory chain (PubMed:25759169). F-type ATP synthases consist of two structural domains, F(1) - containing the extramembraneous catalytic core, and F(0) - containing the membrane proton channel, linked together by a central stalk and a peripheral stalk (PubMed:27791192). During catalysis, ATP synthesis in the catalytic domain of F(1) is coupled via a rotary mechanism of the central stalk subunits to proton translocation (By similarity). Part of the complex F(0) domain (By similarity). Minor subunit located with subunit a/ATP6 in the membrane (By similarity). Together with subunit g/ATP20, probably contributes to membrane curvature at the site of the ATP synthase dimer, ultimately contributing to formation of cristae (By similarity).</text>
</comment>
<comment type="subunit">
    <text evidence="1 4 5">F-type ATP synthases have 2 components, the catalytic core F(1) and the membrane-embedded component F(0), linked together by a central stalk and a peripheral stalk (PubMed:27791192). The central stalk, also called rotor shaft, is often seen as part of F(1) (PubMed:27791192). The peripheral stalk is seen as part of F(0). F(0) contains the membrane channel next to the rotor (PubMed:27791192). F-type ATP synthases form dimers but each monomer functions independently in ATP generation (By similarity). The dimer consists of 18 different polypeptides: ATP1 (subunit alpha, part of F(1), 3 molecules per monomer), ATP2 (subunit beta, part of F(1), 3 molecules per monomer), ATP3 (subunit gamma, part of the central stalk), ATP4 (subunit b, part of the peripheral stalk), ATP5/OSCP (subunit 5/OSCP, part of the peripheral stalk), ATP6 (subunit a, part of the peripheral stalk), ATP7 (subunit d, part of the peripheral stalk), ATP8 (subunit 8, part of the peripheral stalk), OLI1 (subunit c, part of the rotor, 10 molecules per monomer), ATP14 (subunit h, part of the peripheral stalk), ATP15 (subunit epsilon, part of the central stalk), ATP16 (subunit delta, part of the central stalk), ATP17 (subunit f, part of the peripheral stalk), ATP18 (subunit i/j, part of the peripheral stalk) (PubMed:25759169, PubMed:27791192). Dimer-specific subunits are ATP19 (subunit k, at interface between monomers), ATP20 (subunit g, at interface between monomers), TIM11 (subunit e, at interface between monomers) (By similarity). Also contains subunit L (PubMed:25759169).</text>
</comment>
<comment type="subcellular location">
    <subcellularLocation>
        <location evidence="10">Mitochondrion inner membrane</location>
        <topology evidence="3">Single-pass membrane protein</topology>
    </subcellularLocation>
    <text evidence="10">The F-type ATP synthase complex is anchored in the mitochondrial inner membrane via the F(0) domain with the F(1) domain and the peripheral stalk extending into the mitochondrial matrix.</text>
</comment>
<comment type="mass spectrometry" mass="9987.0" method="MALDI" evidence="4"/>
<comment type="similarity">
    <text evidence="9">Belongs to the ATPase e subunit family.</text>
</comment>